<organism>
    <name type="scientific">Enterococcus faecalis (strain ATCC 700802 / V583)</name>
    <dbReference type="NCBI Taxonomy" id="226185"/>
    <lineage>
        <taxon>Bacteria</taxon>
        <taxon>Bacillati</taxon>
        <taxon>Bacillota</taxon>
        <taxon>Bacilli</taxon>
        <taxon>Lactobacillales</taxon>
        <taxon>Enterococcaceae</taxon>
        <taxon>Enterococcus</taxon>
    </lineage>
</organism>
<sequence>MSNKKLIINADDFGYTPAVTQGIIEAHKRGVVTSTTALPTSPYFLEAMESARISAPTLAIGVHLTLTLNQAKPILPREMVPSLVDEAGYFWHQSIFEEKVNLEEVYNEWDAQIISFMKSGRRPDHIDSHHNVHGKNKKLLGVALALARKYQLPLRNASRSIETKDYLELYQDVRTPDEMLYQFYDKAISTETILQLLDMVVCSEGEVFEINCHPAFIDTILQNQSGYCMPRIREVEILTSQEVKEAIEERGILLANYESLAM</sequence>
<gene>
    <name type="ordered locus">EF_3048</name>
</gene>
<proteinExistence type="evidence at protein level"/>
<comment type="function">
    <text evidence="1">Probably catalyzes the deacetylation of acetylated carbohydrates an important step in the degradation of oligosaccharides.</text>
</comment>
<comment type="cofactor">
    <cofactor evidence="1">
        <name>Mg(2+)</name>
        <dbReference type="ChEBI" id="CHEBI:18420"/>
    </cofactor>
</comment>
<comment type="subunit">
    <text evidence="2">Homodimer.</text>
</comment>
<comment type="similarity">
    <text evidence="1">Belongs to the YdjC deacetylase family.</text>
</comment>
<keyword id="KW-0002">3D-structure</keyword>
<keyword id="KW-0119">Carbohydrate metabolism</keyword>
<keyword id="KW-0378">Hydrolase</keyword>
<keyword id="KW-0460">Magnesium</keyword>
<keyword id="KW-0479">Metal-binding</keyword>
<keyword id="KW-1185">Reference proteome</keyword>
<accession>P59745</accession>
<dbReference type="EC" id="3.5.1.-" evidence="1"/>
<dbReference type="EMBL" id="AE016830">
    <property type="protein sequence ID" value="AAO82730.1"/>
    <property type="molecule type" value="Genomic_DNA"/>
</dbReference>
<dbReference type="RefSeq" id="NP_816660.1">
    <property type="nucleotide sequence ID" value="NC_004668.1"/>
</dbReference>
<dbReference type="PDB" id="2I5I">
    <property type="method" value="X-ray"/>
    <property type="resolution" value="1.70 A"/>
    <property type="chains" value="A/B=1-262"/>
</dbReference>
<dbReference type="PDBsum" id="2I5I"/>
<dbReference type="SMR" id="P59745"/>
<dbReference type="STRING" id="226185.EF_3048"/>
<dbReference type="EnsemblBacteria" id="AAO82730">
    <property type="protein sequence ID" value="AAO82730"/>
    <property type="gene ID" value="EF_3048"/>
</dbReference>
<dbReference type="KEGG" id="efa:EF3048"/>
<dbReference type="PATRIC" id="fig|226185.45.peg.522"/>
<dbReference type="eggNOG" id="COG3394">
    <property type="taxonomic scope" value="Bacteria"/>
</dbReference>
<dbReference type="HOGENOM" id="CLU_064244_4_0_9"/>
<dbReference type="EvolutionaryTrace" id="P59745"/>
<dbReference type="Proteomes" id="UP000001415">
    <property type="component" value="Chromosome"/>
</dbReference>
<dbReference type="GO" id="GO:0019213">
    <property type="term" value="F:deacetylase activity"/>
    <property type="evidence" value="ECO:0007669"/>
    <property type="project" value="TreeGrafter"/>
</dbReference>
<dbReference type="GO" id="GO:0016811">
    <property type="term" value="F:hydrolase activity, acting on carbon-nitrogen (but not peptide) bonds, in linear amides"/>
    <property type="evidence" value="ECO:0007669"/>
    <property type="project" value="UniProtKB-UniRule"/>
</dbReference>
<dbReference type="GO" id="GO:0046872">
    <property type="term" value="F:metal ion binding"/>
    <property type="evidence" value="ECO:0007669"/>
    <property type="project" value="UniProtKB-KW"/>
</dbReference>
<dbReference type="GO" id="GO:0000272">
    <property type="term" value="P:polysaccharide catabolic process"/>
    <property type="evidence" value="ECO:0007669"/>
    <property type="project" value="InterPro"/>
</dbReference>
<dbReference type="CDD" id="cd10803">
    <property type="entry name" value="YdjC_EF3048_like"/>
    <property type="match status" value="1"/>
</dbReference>
<dbReference type="Gene3D" id="3.20.20.370">
    <property type="entry name" value="Glycoside hydrolase/deacetylase"/>
    <property type="match status" value="1"/>
</dbReference>
<dbReference type="HAMAP" id="MF_01246">
    <property type="entry name" value="COD"/>
    <property type="match status" value="1"/>
</dbReference>
<dbReference type="InterPro" id="IPR022948">
    <property type="entry name" value="COD_ChbG_bac"/>
</dbReference>
<dbReference type="InterPro" id="IPR011330">
    <property type="entry name" value="Glyco_hydro/deAcase_b/a-brl"/>
</dbReference>
<dbReference type="InterPro" id="IPR006879">
    <property type="entry name" value="YdjC-like"/>
</dbReference>
<dbReference type="PANTHER" id="PTHR31609:SF1">
    <property type="entry name" value="CARBOHYDRATE DEACETYLASE"/>
    <property type="match status" value="1"/>
</dbReference>
<dbReference type="PANTHER" id="PTHR31609">
    <property type="entry name" value="YDJC DEACETYLASE FAMILY MEMBER"/>
    <property type="match status" value="1"/>
</dbReference>
<dbReference type="Pfam" id="PF04794">
    <property type="entry name" value="YdjC"/>
    <property type="match status" value="1"/>
</dbReference>
<dbReference type="SUPFAM" id="SSF88713">
    <property type="entry name" value="Glycoside hydrolase/deacetylase"/>
    <property type="match status" value="1"/>
</dbReference>
<reference key="1">
    <citation type="journal article" date="2003" name="Science">
        <title>Role of mobile DNA in the evolution of vancomycin-resistant Enterococcus faecalis.</title>
        <authorList>
            <person name="Paulsen I.T."/>
            <person name="Banerjei L."/>
            <person name="Myers G.S.A."/>
            <person name="Nelson K.E."/>
            <person name="Seshadri R."/>
            <person name="Read T.D."/>
            <person name="Fouts D.E."/>
            <person name="Eisen J.A."/>
            <person name="Gill S.R."/>
            <person name="Heidelberg J.F."/>
            <person name="Tettelin H."/>
            <person name="Dodson R.J."/>
            <person name="Umayam L.A."/>
            <person name="Brinkac L.M."/>
            <person name="Beanan M.J."/>
            <person name="Daugherty S.C."/>
            <person name="DeBoy R.T."/>
            <person name="Durkin S.A."/>
            <person name="Kolonay J.F."/>
            <person name="Madupu R."/>
            <person name="Nelson W.C."/>
            <person name="Vamathevan J.J."/>
            <person name="Tran B."/>
            <person name="Upton J."/>
            <person name="Hansen T."/>
            <person name="Shetty J."/>
            <person name="Khouri H.M."/>
            <person name="Utterback T.R."/>
            <person name="Radune D."/>
            <person name="Ketchum K.A."/>
            <person name="Dougherty B.A."/>
            <person name="Fraser C.M."/>
        </authorList>
    </citation>
    <scope>NUCLEOTIDE SEQUENCE [LARGE SCALE GENOMIC DNA]</scope>
    <source>
        <strain>ATCC 700802 / V583</strain>
    </source>
</reference>
<reference key="2">
    <citation type="submission" date="2011-07" db="PDB data bank">
        <title>Crystal structure of hypothetical protein (ef3048) from Enterococcus faecalis V583 at 1.70 a resolution.</title>
        <authorList>
            <consortium name="Joint center for structural genomics (JCSG)"/>
        </authorList>
    </citation>
    <scope>X-RAY CRYSTALLOGRAPHY (1.7 ANGSTROMS)</scope>
    <scope>SUBUNIT</scope>
</reference>
<evidence type="ECO:0000255" key="1">
    <source>
        <dbReference type="HAMAP-Rule" id="MF_01246"/>
    </source>
</evidence>
<evidence type="ECO:0000269" key="2">
    <source ref="2"/>
</evidence>
<evidence type="ECO:0007829" key="3">
    <source>
        <dbReference type="PDB" id="2I5I"/>
    </source>
</evidence>
<feature type="chain" id="PRO_0000051592" description="Carbohydrate deacetylase">
    <location>
        <begin position="1"/>
        <end position="262"/>
    </location>
</feature>
<feature type="binding site" evidence="1">
    <location>
        <position position="129"/>
    </location>
    <ligand>
        <name>Mg(2+)</name>
        <dbReference type="ChEBI" id="CHEBI:18420"/>
    </ligand>
</feature>
<feature type="strand" evidence="3">
    <location>
        <begin position="5"/>
        <end position="13"/>
    </location>
</feature>
<feature type="helix" evidence="3">
    <location>
        <begin position="17"/>
        <end position="28"/>
    </location>
</feature>
<feature type="strand" evidence="3">
    <location>
        <begin position="29"/>
        <end position="31"/>
    </location>
</feature>
<feature type="strand" evidence="3">
    <location>
        <begin position="34"/>
        <end position="37"/>
    </location>
</feature>
<feature type="helix" evidence="3">
    <location>
        <begin position="44"/>
        <end position="54"/>
    </location>
</feature>
<feature type="strand" evidence="3">
    <location>
        <begin position="59"/>
        <end position="64"/>
    </location>
</feature>
<feature type="turn" evidence="3">
    <location>
        <begin position="77"/>
        <end position="79"/>
    </location>
</feature>
<feature type="helix" evidence="3">
    <location>
        <begin position="81"/>
        <end position="83"/>
    </location>
</feature>
<feature type="helix" evidence="3">
    <location>
        <begin position="93"/>
        <end position="96"/>
    </location>
</feature>
<feature type="turn" evidence="3">
    <location>
        <begin position="97"/>
        <end position="99"/>
    </location>
</feature>
<feature type="helix" evidence="3">
    <location>
        <begin position="102"/>
        <end position="116"/>
    </location>
</feature>
<feature type="helix" evidence="3">
    <location>
        <begin position="117"/>
        <end position="119"/>
    </location>
</feature>
<feature type="strand" evidence="3">
    <location>
        <begin position="126"/>
        <end position="128"/>
    </location>
</feature>
<feature type="helix" evidence="3">
    <location>
        <begin position="129"/>
        <end position="134"/>
    </location>
</feature>
<feature type="helix" evidence="3">
    <location>
        <begin position="137"/>
        <end position="150"/>
    </location>
</feature>
<feature type="helix" evidence="3">
    <location>
        <begin position="161"/>
        <end position="169"/>
    </location>
</feature>
<feature type="turn" evidence="3">
    <location>
        <begin position="170"/>
        <end position="172"/>
    </location>
</feature>
<feature type="strand" evidence="3">
    <location>
        <begin position="177"/>
        <end position="180"/>
    </location>
</feature>
<feature type="helix" evidence="3">
    <location>
        <begin position="185"/>
        <end position="187"/>
    </location>
</feature>
<feature type="helix" evidence="3">
    <location>
        <begin position="190"/>
        <end position="202"/>
    </location>
</feature>
<feature type="strand" evidence="3">
    <location>
        <begin position="206"/>
        <end position="212"/>
    </location>
</feature>
<feature type="helix" evidence="3">
    <location>
        <begin position="219"/>
        <end position="224"/>
    </location>
</feature>
<feature type="helix" evidence="3">
    <location>
        <begin position="230"/>
        <end position="238"/>
    </location>
</feature>
<feature type="helix" evidence="3">
    <location>
        <begin position="241"/>
        <end position="249"/>
    </location>
</feature>
<feature type="strand" evidence="3">
    <location>
        <begin position="253"/>
        <end position="255"/>
    </location>
</feature>
<feature type="helix" evidence="3">
    <location>
        <begin position="257"/>
        <end position="260"/>
    </location>
</feature>
<name>YDJC_ENTFA</name>
<protein>
    <recommendedName>
        <fullName evidence="1">Carbohydrate deacetylase</fullName>
        <ecNumber evidence="1">3.5.1.-</ecNumber>
    </recommendedName>
</protein>